<keyword id="KW-0002">3D-structure</keyword>
<keyword id="KW-0025">Alternative splicing</keyword>
<keyword id="KW-0067">ATP-binding</keyword>
<keyword id="KW-0963">Cytoplasm</keyword>
<keyword id="KW-0418">Kinase</keyword>
<keyword id="KW-0547">Nucleotide-binding</keyword>
<keyword id="KW-0539">Nucleus</keyword>
<keyword id="KW-1267">Proteomics identification</keyword>
<keyword id="KW-1185">Reference proteome</keyword>
<keyword id="KW-0690">Ribosome biogenesis</keyword>
<keyword id="KW-0698">rRNA processing</keyword>
<keyword id="KW-0808">Transferase</keyword>
<gene>
    <name evidence="1" type="primary">AK6</name>
    <name evidence="1" type="synonym">CINAP</name>
    <name type="ORF">AD-004</name>
    <name type="ORF">CGI-137</name>
</gene>
<reference key="1">
    <citation type="journal article" date="2005" name="J. Biol. Chem.">
        <title>Characterization of hCINAP, a novel coilin-interacting protein encoded by a transcript from the transcription factor TAFIID32 locus.</title>
        <authorList>
            <person name="Santama N."/>
            <person name="Ogg S.C."/>
            <person name="Malekkou A."/>
            <person name="Zographos S.E."/>
            <person name="Weis K."/>
            <person name="Lamond A.I."/>
        </authorList>
    </citation>
    <scope>NUCLEOTIDE SEQUENCE [MRNA] (ISOFORM 1)</scope>
    <scope>BIOPHYSICOCHEMICAL PROPERTIES</scope>
    <scope>INTERACTION WITH COIL</scope>
    <scope>SUBCELLULAR LOCATION</scope>
    <scope>TISSUE SPECIFICITY</scope>
    <scope>ALTERNATIVE SPLICING</scope>
    <source>
        <tissue>Cervix carcinoma</tissue>
        <tissue>Placenta</tissue>
    </source>
</reference>
<reference key="2">
    <citation type="journal article" date="2000" name="Genome Res.">
        <title>Identification of novel human genes evolutionarily conserved in Caenorhabditis elegans by comparative proteomics.</title>
        <authorList>
            <person name="Lai C.-H."/>
            <person name="Chou C.-Y."/>
            <person name="Ch'ang L.-Y."/>
            <person name="Liu C.-S."/>
            <person name="Lin W.-C."/>
        </authorList>
    </citation>
    <scope>NUCLEOTIDE SEQUENCE [LARGE SCALE MRNA] (ISOFORM 1)</scope>
</reference>
<reference key="3">
    <citation type="journal article" date="2000" name="Proc. Natl. Acad. Sci. U.S.A.">
        <title>Gene expression profiling in the human hypothalamus-pituitary-adrenal axis and full-length cDNA cloning.</title>
        <authorList>
            <person name="Hu R.-M."/>
            <person name="Han Z.-G."/>
            <person name="Song H.-D."/>
            <person name="Peng Y.-D."/>
            <person name="Huang Q.-H."/>
            <person name="Ren S.-X."/>
            <person name="Gu Y.-J."/>
            <person name="Huang C.-H."/>
            <person name="Li Y.-B."/>
            <person name="Jiang C.-L."/>
            <person name="Fu G."/>
            <person name="Zhang Q.-H."/>
            <person name="Gu B.-W."/>
            <person name="Dai M."/>
            <person name="Mao Y.-F."/>
            <person name="Gao G.-F."/>
            <person name="Rong R."/>
            <person name="Ye M."/>
            <person name="Zhou J."/>
            <person name="Xu S.-H."/>
            <person name="Gu J."/>
            <person name="Shi J.-X."/>
            <person name="Jin W.-R."/>
            <person name="Zhang C.-K."/>
            <person name="Wu T.-M."/>
            <person name="Huang G.-Y."/>
            <person name="Chen Z."/>
            <person name="Chen M.-D."/>
            <person name="Chen J.-L."/>
        </authorList>
    </citation>
    <scope>NUCLEOTIDE SEQUENCE [LARGE SCALE MRNA] (ISOFORM 1)</scope>
    <source>
        <tissue>Adrenal gland</tissue>
    </source>
</reference>
<reference key="4">
    <citation type="journal article" date="2004" name="Nature">
        <title>The DNA sequence and comparative analysis of human chromosome 5.</title>
        <authorList>
            <person name="Schmutz J."/>
            <person name="Martin J."/>
            <person name="Terry A."/>
            <person name="Couronne O."/>
            <person name="Grimwood J."/>
            <person name="Lowry S."/>
            <person name="Gordon L.A."/>
            <person name="Scott D."/>
            <person name="Xie G."/>
            <person name="Huang W."/>
            <person name="Hellsten U."/>
            <person name="Tran-Gyamfi M."/>
            <person name="She X."/>
            <person name="Prabhakar S."/>
            <person name="Aerts A."/>
            <person name="Altherr M."/>
            <person name="Bajorek E."/>
            <person name="Black S."/>
            <person name="Branscomb E."/>
            <person name="Caoile C."/>
            <person name="Challacombe J.F."/>
            <person name="Chan Y.M."/>
            <person name="Denys M."/>
            <person name="Detter J.C."/>
            <person name="Escobar J."/>
            <person name="Flowers D."/>
            <person name="Fotopulos D."/>
            <person name="Glavina T."/>
            <person name="Gomez M."/>
            <person name="Gonzales E."/>
            <person name="Goodstein D."/>
            <person name="Grigoriev I."/>
            <person name="Groza M."/>
            <person name="Hammon N."/>
            <person name="Hawkins T."/>
            <person name="Haydu L."/>
            <person name="Israni S."/>
            <person name="Jett J."/>
            <person name="Kadner K."/>
            <person name="Kimball H."/>
            <person name="Kobayashi A."/>
            <person name="Lopez F."/>
            <person name="Lou Y."/>
            <person name="Martinez D."/>
            <person name="Medina C."/>
            <person name="Morgan J."/>
            <person name="Nandkeshwar R."/>
            <person name="Noonan J.P."/>
            <person name="Pitluck S."/>
            <person name="Pollard M."/>
            <person name="Predki P."/>
            <person name="Priest J."/>
            <person name="Ramirez L."/>
            <person name="Retterer J."/>
            <person name="Rodriguez A."/>
            <person name="Rogers S."/>
            <person name="Salamov A."/>
            <person name="Salazar A."/>
            <person name="Thayer N."/>
            <person name="Tice H."/>
            <person name="Tsai M."/>
            <person name="Ustaszewska A."/>
            <person name="Vo N."/>
            <person name="Wheeler J."/>
            <person name="Wu K."/>
            <person name="Yang J."/>
            <person name="Dickson M."/>
            <person name="Cheng J.-F."/>
            <person name="Eichler E.E."/>
            <person name="Olsen A."/>
            <person name="Pennacchio L.A."/>
            <person name="Rokhsar D.S."/>
            <person name="Richardson P."/>
            <person name="Lucas S.M."/>
            <person name="Myers R.M."/>
            <person name="Rubin E.M."/>
        </authorList>
    </citation>
    <scope>NUCLEOTIDE SEQUENCE [LARGE SCALE GENOMIC DNA]</scope>
</reference>
<reference key="5">
    <citation type="submission" date="2005-09" db="EMBL/GenBank/DDBJ databases">
        <authorList>
            <person name="Mural R.J."/>
            <person name="Istrail S."/>
            <person name="Sutton G.G."/>
            <person name="Florea L."/>
            <person name="Halpern A.L."/>
            <person name="Mobarry C.M."/>
            <person name="Lippert R."/>
            <person name="Walenz B."/>
            <person name="Shatkay H."/>
            <person name="Dew I."/>
            <person name="Miller J.R."/>
            <person name="Flanigan M.J."/>
            <person name="Edwards N.J."/>
            <person name="Bolanos R."/>
            <person name="Fasulo D."/>
            <person name="Halldorsson B.V."/>
            <person name="Hannenhalli S."/>
            <person name="Turner R."/>
            <person name="Yooseph S."/>
            <person name="Lu F."/>
            <person name="Nusskern D.R."/>
            <person name="Shue B.C."/>
            <person name="Zheng X.H."/>
            <person name="Zhong F."/>
            <person name="Delcher A.L."/>
            <person name="Huson D.H."/>
            <person name="Kravitz S.A."/>
            <person name="Mouchard L."/>
            <person name="Reinert K."/>
            <person name="Remington K.A."/>
            <person name="Clark A.G."/>
            <person name="Waterman M.S."/>
            <person name="Eichler E.E."/>
            <person name="Adams M.D."/>
            <person name="Hunkapiller M.W."/>
            <person name="Myers E.W."/>
            <person name="Venter J.C."/>
        </authorList>
    </citation>
    <scope>NUCLEOTIDE SEQUENCE [LARGE SCALE GENOMIC DNA]</scope>
</reference>
<reference key="6">
    <citation type="journal article" date="2004" name="Genome Res.">
        <title>The status, quality, and expansion of the NIH full-length cDNA project: the Mammalian Gene Collection (MGC).</title>
        <authorList>
            <consortium name="The MGC Project Team"/>
        </authorList>
    </citation>
    <scope>NUCLEOTIDE SEQUENCE [LARGE SCALE MRNA] (ISOFORM 1)</scope>
    <source>
        <tissue>Lymph</tissue>
    </source>
</reference>
<reference key="7">
    <citation type="journal article" date="2004" name="Acta Crystallogr. D">
        <title>Protein preparation, crystallization and preliminary X-ray analysis of human adrenal gland protein AD-004.</title>
        <authorList>
            <person name="Ren H."/>
            <person name="Liang Y."/>
            <person name="Li R."/>
            <person name="Ding H."/>
            <person name="Qiu S."/>
            <person name="Lu S."/>
            <person name="An J."/>
            <person name="Li L."/>
            <person name="Luo M."/>
            <person name="Zheng X."/>
            <person name="Su X.D."/>
        </authorList>
    </citation>
    <scope>SUBUNIT</scope>
</reference>
<reference key="8">
    <citation type="journal article" date="2011" name="BMC Syst. Biol.">
        <title>Initial characterization of the human central proteome.</title>
        <authorList>
            <person name="Burkard T.R."/>
            <person name="Planyavsky M."/>
            <person name="Kaupe I."/>
            <person name="Breitwieser F.P."/>
            <person name="Buerckstuemmer T."/>
            <person name="Bennett K.L."/>
            <person name="Superti-Furga G."/>
            <person name="Colinge J."/>
        </authorList>
    </citation>
    <scope>IDENTIFICATION BY MASS SPECTROMETRY [LARGE SCALE ANALYSIS]</scope>
</reference>
<reference key="9">
    <citation type="journal article" date="2005" name="Proc. Natl. Acad. Sci. U.S.A.">
        <title>The crystal structure of human adenylate kinase 6: an adenylate kinase localized to the cell nucleus.</title>
        <authorList>
            <person name="Ren H."/>
            <person name="Wang L."/>
            <person name="Bennett M."/>
            <person name="Liang Y."/>
            <person name="Zheng X."/>
            <person name="Lu F."/>
            <person name="Li L."/>
            <person name="Nan J."/>
            <person name="Luo M."/>
            <person name="Eriksson S."/>
            <person name="Zhang C."/>
            <person name="Su X.-D."/>
        </authorList>
    </citation>
    <scope>X-RAY CRYSTALLOGRAPHY (2.0 ANGSTROMS)</scope>
    <scope>FUNCTION</scope>
    <scope>CATALYTIC ACTIVITY</scope>
    <scope>BIOPHYSICOCHEMICAL PROPERTIES</scope>
    <scope>SUBCELLULAR LOCATION</scope>
</reference>
<reference key="10">
    <citation type="journal article" date="2012" name="Proteins">
        <title>hCINAP is an atypical mammalian nuclear adenylate kinase with an ATPase motif: structural and functional studies.</title>
        <authorList>
            <person name="Drakou C.E."/>
            <person name="Malekkou A."/>
            <person name="Hayes J.M."/>
            <person name="Lederer C.W."/>
            <person name="Leonidas D.D."/>
            <person name="Oikonomakos N.G."/>
            <person name="Lamond A.I."/>
            <person name="Santama N."/>
            <person name="Zographos S.E."/>
        </authorList>
    </citation>
    <scope>X-RAY CRYSTALLOGRAPHY (1.76 ANGSTROMS) IN COMPLEX WITH ADP AND DADP</scope>
    <scope>MUTAGENESIS OF HIS-79</scope>
    <scope>BIOPHYSICOCHEMICAL PROPERTIES</scope>
</reference>
<reference evidence="10" key="11">
    <citation type="journal article" date="2016" name="Nat. Commun.">
        <title>The ATPase hCINAP regulates 18S rRNA processing and is essential for embryogenesis and tumour growth.</title>
        <authorList>
            <person name="Bai D."/>
            <person name="Zhang J."/>
            <person name="Li T."/>
            <person name="Hang R."/>
            <person name="Liu Y."/>
            <person name="Tian Y."/>
            <person name="Huang D."/>
            <person name="Qu L."/>
            <person name="Cao X."/>
            <person name="Ji J."/>
            <person name="Zheng X."/>
        </authorList>
    </citation>
    <scope>X-RAY CRYSTALLOGRAPHY (2.07 ANGSTROMS) IN COMPLEX WITH ADP</scope>
    <scope>FUNCTION</scope>
</reference>
<proteinExistence type="evidence at protein level"/>
<dbReference type="EC" id="2.7.4.3" evidence="1"/>
<dbReference type="EMBL" id="AJ878880">
    <property type="protein sequence ID" value="CAI48030.1"/>
    <property type="molecule type" value="mRNA"/>
</dbReference>
<dbReference type="EMBL" id="AJ878881">
    <property type="protein sequence ID" value="CAI48031.1"/>
    <property type="molecule type" value="mRNA"/>
</dbReference>
<dbReference type="EMBL" id="AF151895">
    <property type="protein sequence ID" value="AAD34132.1"/>
    <property type="molecule type" value="mRNA"/>
</dbReference>
<dbReference type="EMBL" id="AF110777">
    <property type="protein sequence ID" value="AAF14860.1"/>
    <property type="molecule type" value="mRNA"/>
</dbReference>
<dbReference type="EMBL" id="AC145132">
    <property type="status" value="NOT_ANNOTATED_CDS"/>
    <property type="molecule type" value="Genomic_DNA"/>
</dbReference>
<dbReference type="EMBL" id="CH471137">
    <property type="protein sequence ID" value="EAW51290.1"/>
    <property type="molecule type" value="Genomic_DNA"/>
</dbReference>
<dbReference type="EMBL" id="CH471137">
    <property type="protein sequence ID" value="EAW51291.1"/>
    <property type="molecule type" value="Genomic_DNA"/>
</dbReference>
<dbReference type="EMBL" id="CH471137">
    <property type="protein sequence ID" value="EAW51292.1"/>
    <property type="molecule type" value="Genomic_DNA"/>
</dbReference>
<dbReference type="EMBL" id="CH471137">
    <property type="protein sequence ID" value="EAW51297.1"/>
    <property type="molecule type" value="Genomic_DNA"/>
</dbReference>
<dbReference type="EMBL" id="BC007349">
    <property type="protein sequence ID" value="AAH07349.1"/>
    <property type="molecule type" value="mRNA"/>
</dbReference>
<dbReference type="EMBL" id="BC007426">
    <property type="protein sequence ID" value="AAH07426.1"/>
    <property type="molecule type" value="mRNA"/>
</dbReference>
<dbReference type="CCDS" id="CCDS4001.1">
    <molecule id="Q9Y3D8-1"/>
</dbReference>
<dbReference type="CCDS" id="CCDS43324.1">
    <molecule id="Q9Y3D8-2"/>
</dbReference>
<dbReference type="RefSeq" id="NP_001015891.1">
    <molecule id="Q9Y3D8-2"/>
    <property type="nucleotide sequence ID" value="NM_001015891.2"/>
</dbReference>
<dbReference type="RefSeq" id="NP_057367.1">
    <molecule id="Q9Y3D8-1"/>
    <property type="nucleotide sequence ID" value="NM_016283.5"/>
</dbReference>
<dbReference type="PDB" id="1RKB">
    <property type="method" value="X-ray"/>
    <property type="resolution" value="2.00 A"/>
    <property type="chains" value="A=1-172"/>
</dbReference>
<dbReference type="PDB" id="3IIJ">
    <property type="method" value="X-ray"/>
    <property type="resolution" value="1.76 A"/>
    <property type="chains" value="A=1-172"/>
</dbReference>
<dbReference type="PDB" id="3IIK">
    <property type="method" value="X-ray"/>
    <property type="resolution" value="1.95 A"/>
    <property type="chains" value="A=1-172"/>
</dbReference>
<dbReference type="PDB" id="3IIL">
    <property type="method" value="X-ray"/>
    <property type="resolution" value="2.00 A"/>
    <property type="chains" value="A=1-172"/>
</dbReference>
<dbReference type="PDB" id="3IIM">
    <property type="method" value="X-ray"/>
    <property type="resolution" value="2.00 A"/>
    <property type="chains" value="A=1-172"/>
</dbReference>
<dbReference type="PDB" id="5JZV">
    <property type="method" value="X-ray"/>
    <property type="resolution" value="2.07 A"/>
    <property type="chains" value="A=1-172"/>
</dbReference>
<dbReference type="PDBsum" id="1RKB"/>
<dbReference type="PDBsum" id="3IIJ"/>
<dbReference type="PDBsum" id="3IIK"/>
<dbReference type="PDBsum" id="3IIL"/>
<dbReference type="PDBsum" id="3IIM"/>
<dbReference type="PDBsum" id="5JZV"/>
<dbReference type="SMR" id="Q9Y3D8"/>
<dbReference type="BioGRID" id="3194050">
    <property type="interactions" value="23"/>
</dbReference>
<dbReference type="FunCoup" id="Q9Y3D8">
    <property type="interactions" value="2734"/>
</dbReference>
<dbReference type="IntAct" id="Q9Y3D8">
    <property type="interactions" value="20"/>
</dbReference>
<dbReference type="MINT" id="Q9Y3D8"/>
<dbReference type="STRING" id="9606.ENSP00000370201"/>
<dbReference type="GlyGen" id="Q9Y3D8">
    <property type="glycosylation" value="1 site, 1 O-linked glycan (1 site)"/>
</dbReference>
<dbReference type="iPTMnet" id="Q9Y3D8"/>
<dbReference type="PhosphoSitePlus" id="Q9Y3D8"/>
<dbReference type="BioMuta" id="AK6"/>
<dbReference type="DMDM" id="6831735"/>
<dbReference type="jPOST" id="Q9Y3D8"/>
<dbReference type="MassIVE" id="Q9Y3D8"/>
<dbReference type="PaxDb" id="9606-ENSP00000370201"/>
<dbReference type="PeptideAtlas" id="Q9Y3D8"/>
<dbReference type="ProteomicsDB" id="86024">
    <molecule id="Q9Y3D8-1"/>
</dbReference>
<dbReference type="ProteomicsDB" id="86025">
    <molecule id="Q9Y3D8-2"/>
</dbReference>
<dbReference type="Pumba" id="Q9Y3D8"/>
<dbReference type="Antibodypedia" id="3945">
    <property type="antibodies" value="105 antibodies from 23 providers"/>
</dbReference>
<dbReference type="DNASU" id="6880"/>
<dbReference type="Ensembl" id="ENST00000380818.7">
    <molecule id="Q9Y3D8-2"/>
    <property type="protein sequence ID" value="ENSP00000370197.3"/>
    <property type="gene ID" value="ENSG00000085231.14"/>
</dbReference>
<dbReference type="Ensembl" id="ENST00000380822.9">
    <molecule id="Q9Y3D8-1"/>
    <property type="protein sequence ID" value="ENSP00000370201.4"/>
    <property type="gene ID" value="ENSG00000085231.14"/>
</dbReference>
<dbReference type="Ensembl" id="ENST00000612207.4">
    <molecule id="Q9Y3D8-1"/>
    <property type="protein sequence ID" value="ENSP00000484679.1"/>
    <property type="gene ID" value="ENSG00000279247.3"/>
</dbReference>
<dbReference type="Ensembl" id="ENST00000620269.4">
    <molecule id="Q9Y3D8-2"/>
    <property type="protein sequence ID" value="ENSP00000480829.1"/>
    <property type="gene ID" value="ENSG00000279247.3"/>
</dbReference>
<dbReference type="GeneID" id="102157402"/>
<dbReference type="KEGG" id="hsa:102157402"/>
<dbReference type="MANE-Select" id="ENST00000380822.9">
    <property type="protein sequence ID" value="ENSP00000370201.4"/>
    <property type="RefSeq nucleotide sequence ID" value="NM_016283.5"/>
    <property type="RefSeq protein sequence ID" value="NP_057367.1"/>
</dbReference>
<dbReference type="UCSC" id="uc003jwa.4">
    <molecule id="Q9Y3D8-1"/>
    <property type="organism name" value="human"/>
</dbReference>
<dbReference type="AGR" id="HGNC:49151"/>
<dbReference type="CTD" id="102157402"/>
<dbReference type="DisGeNET" id="102157402"/>
<dbReference type="GeneCards" id="AK6"/>
<dbReference type="HGNC" id="HGNC:49151">
    <property type="gene designation" value="AK6"/>
</dbReference>
<dbReference type="HPA" id="ENSG00000085231">
    <property type="expression patterns" value="Low tissue specificity"/>
</dbReference>
<dbReference type="MIM" id="619357">
    <property type="type" value="gene"/>
</dbReference>
<dbReference type="neXtProt" id="NX_Q9Y3D8"/>
<dbReference type="OpenTargets" id="ENSG00000085231"/>
<dbReference type="PharmGKB" id="PA36317"/>
<dbReference type="VEuPathDB" id="HostDB:ENSG00000085231"/>
<dbReference type="eggNOG" id="KOG3347">
    <property type="taxonomic scope" value="Eukaryota"/>
</dbReference>
<dbReference type="GeneTree" id="ENSGT00390000015930"/>
<dbReference type="HOGENOM" id="CLU_079096_3_3_1"/>
<dbReference type="InParanoid" id="Q9Y3D8"/>
<dbReference type="OMA" id="QCEIFGT"/>
<dbReference type="OrthoDB" id="10251185at2759"/>
<dbReference type="PAN-GO" id="Q9Y3D8">
    <property type="GO annotations" value="4 GO annotations based on evolutionary models"/>
</dbReference>
<dbReference type="BRENDA" id="2.7.4.3">
    <property type="organism ID" value="2681"/>
</dbReference>
<dbReference type="PathwayCommons" id="Q9Y3D8"/>
<dbReference type="Reactome" id="R-HSA-499943">
    <property type="pathway name" value="Interconversion of nucleotide di- and triphosphates"/>
</dbReference>
<dbReference type="SignaLink" id="Q9Y3D8"/>
<dbReference type="BioGRID-ORCS" id="102157402">
    <property type="hits" value="620 hits in 1006 CRISPR screens"/>
</dbReference>
<dbReference type="ChiTaRS" id="AK6">
    <property type="organism name" value="human"/>
</dbReference>
<dbReference type="EvolutionaryTrace" id="Q9Y3D8"/>
<dbReference type="GenomeRNAi" id="102157402"/>
<dbReference type="Pharos" id="Q9Y3D8">
    <property type="development level" value="Tbio"/>
</dbReference>
<dbReference type="PRO" id="PR:Q9Y3D8"/>
<dbReference type="Proteomes" id="UP000005640">
    <property type="component" value="Chromosome 5"/>
</dbReference>
<dbReference type="RNAct" id="Q9Y3D8">
    <property type="molecule type" value="protein"/>
</dbReference>
<dbReference type="Bgee" id="ENSG00000085231">
    <property type="expression patterns" value="Expressed in calcaneal tendon and 100 other cell types or tissues"/>
</dbReference>
<dbReference type="ExpressionAtlas" id="Q9Y3D8">
    <property type="expression patterns" value="baseline and differential"/>
</dbReference>
<dbReference type="GO" id="GO:0015030">
    <property type="term" value="C:Cajal body"/>
    <property type="evidence" value="ECO:0000314"/>
    <property type="project" value="UniProtKB"/>
</dbReference>
<dbReference type="GO" id="GO:0005813">
    <property type="term" value="C:centrosome"/>
    <property type="evidence" value="ECO:0000314"/>
    <property type="project" value="HPA"/>
</dbReference>
<dbReference type="GO" id="GO:0005737">
    <property type="term" value="C:cytoplasm"/>
    <property type="evidence" value="ECO:0000318"/>
    <property type="project" value="GO_Central"/>
</dbReference>
<dbReference type="GO" id="GO:0016020">
    <property type="term" value="C:membrane"/>
    <property type="evidence" value="ECO:0007005"/>
    <property type="project" value="UniProtKB"/>
</dbReference>
<dbReference type="GO" id="GO:0016607">
    <property type="term" value="C:nuclear speck"/>
    <property type="evidence" value="ECO:0000314"/>
    <property type="project" value="HPA"/>
</dbReference>
<dbReference type="GO" id="GO:0005654">
    <property type="term" value="C:nucleoplasm"/>
    <property type="evidence" value="ECO:0000314"/>
    <property type="project" value="UniProtKB"/>
</dbReference>
<dbReference type="GO" id="GO:0005634">
    <property type="term" value="C:nucleus"/>
    <property type="evidence" value="ECO:0000318"/>
    <property type="project" value="GO_Central"/>
</dbReference>
<dbReference type="GO" id="GO:0004017">
    <property type="term" value="F:adenylate kinase activity"/>
    <property type="evidence" value="ECO:0000314"/>
    <property type="project" value="UniProtKB"/>
</dbReference>
<dbReference type="GO" id="GO:0005524">
    <property type="term" value="F:ATP binding"/>
    <property type="evidence" value="ECO:0000318"/>
    <property type="project" value="GO_Central"/>
</dbReference>
<dbReference type="GO" id="GO:0016887">
    <property type="term" value="F:ATP hydrolysis activity"/>
    <property type="evidence" value="ECO:0007669"/>
    <property type="project" value="UniProtKB-UniRule"/>
</dbReference>
<dbReference type="GO" id="GO:0050145">
    <property type="term" value="F:nucleoside monophosphate kinase activity"/>
    <property type="evidence" value="ECO:0000304"/>
    <property type="project" value="Reactome"/>
</dbReference>
<dbReference type="GO" id="GO:0015949">
    <property type="term" value="P:nucleobase-containing small molecule interconversion"/>
    <property type="evidence" value="ECO:0000304"/>
    <property type="project" value="Reactome"/>
</dbReference>
<dbReference type="GO" id="GO:0042274">
    <property type="term" value="P:ribosomal small subunit biogenesis"/>
    <property type="evidence" value="ECO:0007669"/>
    <property type="project" value="UniProtKB-UniRule"/>
</dbReference>
<dbReference type="GO" id="GO:0006364">
    <property type="term" value="P:rRNA processing"/>
    <property type="evidence" value="ECO:0007669"/>
    <property type="project" value="UniProtKB-KW"/>
</dbReference>
<dbReference type="FunFam" id="3.40.50.300:FF:003001">
    <property type="entry name" value="Adenylate kinase isoenzyme 6"/>
    <property type="match status" value="1"/>
</dbReference>
<dbReference type="Gene3D" id="3.40.50.300">
    <property type="entry name" value="P-loop containing nucleotide triphosphate hydrolases"/>
    <property type="match status" value="1"/>
</dbReference>
<dbReference type="HAMAP" id="MF_00039">
    <property type="entry name" value="Adenylate_kinase_AK6"/>
    <property type="match status" value="1"/>
</dbReference>
<dbReference type="InterPro" id="IPR020618">
    <property type="entry name" value="Adenyl_kinase_AK6"/>
</dbReference>
<dbReference type="InterPro" id="IPR027417">
    <property type="entry name" value="P-loop_NTPase"/>
</dbReference>
<dbReference type="PANTHER" id="PTHR12595:SF19">
    <property type="entry name" value="ADENYLATE KINASE ISOENZYME 6"/>
    <property type="match status" value="1"/>
</dbReference>
<dbReference type="PANTHER" id="PTHR12595">
    <property type="entry name" value="POS9-ACTIVATING FACTOR FAP7-RELATED"/>
    <property type="match status" value="1"/>
</dbReference>
<dbReference type="Pfam" id="PF13238">
    <property type="entry name" value="AAA_18"/>
    <property type="match status" value="1"/>
</dbReference>
<dbReference type="SUPFAM" id="SSF52540">
    <property type="entry name" value="P-loop containing nucleoside triphosphate hydrolases"/>
    <property type="match status" value="1"/>
</dbReference>
<feature type="chain" id="PRO_0000153896" description="Adenylate kinase isoenzyme 6">
    <location>
        <begin position="1"/>
        <end position="172"/>
    </location>
</feature>
<feature type="region of interest" description="NMP">
    <location>
        <begin position="33"/>
        <end position="56"/>
    </location>
</feature>
<feature type="region of interest" description="NMPbind" evidence="1">
    <location>
        <begin position="33"/>
        <end position="56"/>
    </location>
</feature>
<feature type="region of interest" description="LID" evidence="1">
    <location>
        <begin position="108"/>
        <end position="118"/>
    </location>
</feature>
<feature type="binding site" evidence="1 5 6 8 9 10">
    <location>
        <position position="13"/>
    </location>
    <ligand>
        <name>ATP</name>
        <dbReference type="ChEBI" id="CHEBI:30616"/>
    </ligand>
</feature>
<feature type="binding site" evidence="1 5 6 8 9 10">
    <location>
        <position position="15"/>
    </location>
    <ligand>
        <name>ATP</name>
        <dbReference type="ChEBI" id="CHEBI:30616"/>
    </ligand>
</feature>
<feature type="binding site" evidence="1 5 6 8 9 10">
    <location>
        <position position="16"/>
    </location>
    <ligand>
        <name>ATP</name>
        <dbReference type="ChEBI" id="CHEBI:30616"/>
    </ligand>
</feature>
<feature type="binding site" evidence="1 5 6 8 9 10">
    <location>
        <position position="17"/>
    </location>
    <ligand>
        <name>ATP</name>
        <dbReference type="ChEBI" id="CHEBI:30616"/>
    </ligand>
</feature>
<feature type="binding site" evidence="1 5 6 8 9 10">
    <location>
        <position position="18"/>
    </location>
    <ligand>
        <name>ATP</name>
        <dbReference type="ChEBI" id="CHEBI:30616"/>
    </ligand>
</feature>
<feature type="binding site" evidence="1 5 6 8 9 10">
    <location>
        <position position="109"/>
    </location>
    <ligand>
        <name>ATP</name>
        <dbReference type="ChEBI" id="CHEBI:30616"/>
    </ligand>
</feature>
<feature type="binding site" evidence="1 5 6 8 9 10">
    <location>
        <position position="148"/>
    </location>
    <ligand>
        <name>ATP</name>
        <dbReference type="ChEBI" id="CHEBI:30616"/>
    </ligand>
</feature>
<feature type="splice variant" id="VSP_039714" description="In isoform 2." evidence="7">
    <original>LLPNILLT</original>
    <variation>CHRKP</variation>
    <location>
        <begin position="2"/>
        <end position="9"/>
    </location>
</feature>
<feature type="mutagenesis site" description="Induces homodimerization. Reduces adenylate kinase activity by 72% and ATPase activity by 76%. Significantly changes Cajal body organization in the nucleus, resulting in enhanced apoptosis and reduced proliferation." evidence="5">
    <original>H</original>
    <variation>G</variation>
    <location>
        <position position="79"/>
    </location>
</feature>
<feature type="strand" evidence="11">
    <location>
        <begin position="6"/>
        <end position="9"/>
    </location>
</feature>
<feature type="helix" evidence="11">
    <location>
        <begin position="16"/>
        <end position="27"/>
    </location>
</feature>
<feature type="strand" evidence="11">
    <location>
        <begin position="30"/>
        <end position="33"/>
    </location>
</feature>
<feature type="helix" evidence="11">
    <location>
        <begin position="34"/>
        <end position="41"/>
    </location>
</feature>
<feature type="strand" evidence="11">
    <location>
        <begin position="44"/>
        <end position="48"/>
    </location>
</feature>
<feature type="turn" evidence="11">
    <location>
        <begin position="49"/>
        <end position="52"/>
    </location>
</feature>
<feature type="strand" evidence="11">
    <location>
        <begin position="53"/>
        <end position="56"/>
    </location>
</feature>
<feature type="helix" evidence="11">
    <location>
        <begin position="58"/>
        <end position="71"/>
    </location>
</feature>
<feature type="strand" evidence="11">
    <location>
        <begin position="74"/>
        <end position="77"/>
    </location>
</feature>
<feature type="helix" evidence="11">
    <location>
        <begin position="86"/>
        <end position="88"/>
    </location>
</feature>
<feature type="strand" evidence="11">
    <location>
        <begin position="90"/>
        <end position="96"/>
    </location>
</feature>
<feature type="helix" evidence="11">
    <location>
        <begin position="99"/>
        <end position="108"/>
    </location>
</feature>
<feature type="helix" evidence="11">
    <location>
        <begin position="113"/>
        <end position="124"/>
    </location>
</feature>
<feature type="helix" evidence="11">
    <location>
        <begin position="127"/>
        <end position="135"/>
    </location>
</feature>
<feature type="helix" evidence="11">
    <location>
        <begin position="138"/>
        <end position="140"/>
    </location>
</feature>
<feature type="strand" evidence="11">
    <location>
        <begin position="141"/>
        <end position="145"/>
    </location>
</feature>
<feature type="helix" evidence="11">
    <location>
        <begin position="149"/>
        <end position="169"/>
    </location>
</feature>
<sequence length="172" mass="20061">MLLPNILLTGTPGVGKTTLGKELASKSGLKYINVGDLAREEQLYDGYDEEYDCPILDEDRVVDELDNQMREGGVIVDYHGCDFFPERWFHIVFVLRTDTNVLYERLETRGYNEKKLTDNIQCEIFQVLYEEATASYKEEIVHQLPSNKPEELENNVDQILKWIEQWIKDHNS</sequence>
<comment type="function">
    <text evidence="1 3 6">Broad-specificity nucleoside monophosphate (NMP) kinase that catalyzes the reversible transfer of the terminal phosphate group between nucleoside triphosphates and monophosphates. Also has ATPase activity (PubMed:15630091). Involved in the late cytoplasmic maturation steps of the 40S ribosomal particles, specifically 18S rRNA maturation (PubMed:27477389). While NMP activity is not required for ribosome maturation, ATPase activity is. Associates transiently with small ribosomal subunit protein uS11. ATP hydrolysis breaks the interaction with uS11. May temporarily remove uS11 from the ribosome to enable a conformational change of the ribosomal RNA that is needed for the final maturation step of the small ribosomal subunit (By similarity). Its NMP activity may have a role in nuclear energy homeostasis. AMP and dAMP are the preferred substrates, but CMP and dCMP are also good substrates. IMP is phosphorylated to a much lesser extent. All nucleoside triphosphates ATP, GTP, UTP, CTP, dATP, dCTP, dGTP, and TTP are accepted as phosphate donors. CTP is the best phosphate donor, followed by UTP, ATP, GTP and dCTP. May be involved in regulation of Cajal body (CB) formation (PubMed:15630091).</text>
</comment>
<comment type="catalytic activity">
    <reaction evidence="1 3 5">
        <text>AMP + ATP = 2 ADP</text>
        <dbReference type="Rhea" id="RHEA:12973"/>
        <dbReference type="ChEBI" id="CHEBI:30616"/>
        <dbReference type="ChEBI" id="CHEBI:456215"/>
        <dbReference type="ChEBI" id="CHEBI:456216"/>
        <dbReference type="EC" id="2.7.4.3"/>
    </reaction>
</comment>
<comment type="catalytic activity">
    <reaction evidence="1">
        <text>ATP + H2O = ADP + phosphate + H(+)</text>
        <dbReference type="Rhea" id="RHEA:13065"/>
        <dbReference type="ChEBI" id="CHEBI:15377"/>
        <dbReference type="ChEBI" id="CHEBI:15378"/>
        <dbReference type="ChEBI" id="CHEBI:30616"/>
        <dbReference type="ChEBI" id="CHEBI:43474"/>
        <dbReference type="ChEBI" id="CHEBI:456216"/>
    </reaction>
</comment>
<comment type="biophysicochemical properties">
    <kinetics>
        <KM evidence="3">192 uM for AMP</KM>
        <KM evidence="5">45 uM for ATP (for adenylate kinase activity)</KM>
        <KM evidence="4">75 uM for ATP (for ATPase activity)</KM>
        <KM evidence="5">332 uM for ATP (for ATPase activity)</KM>
        <Vmax evidence="4">1.27 umol/min/mg enzyme for ATPase activity</Vmax>
        <Vmax evidence="3">982.0 nmol/min/mg enzyme for the forward adenylate kinase reaction</Vmax>
        <Vmax evidence="3">955.0 nmol/min/mg enzyme for the reverse adenylate kinase reaction</Vmax>
        <text evidence="5">kcat is 0.0063 sec(-1) for adenylate kinase activity. kcat is 0.00048 sec(-1) for ATPase activity.</text>
    </kinetics>
</comment>
<comment type="subunit">
    <text evidence="1 2 4 5">Monomer and homodimer (PubMed:22038794). Interacts with small ribosomal subunit protein uS11. Not a structural component of 43S pre-ribosomes, but transiently interacts with them by binding to uS11 (By similarity). Interacts with COIL (via C-terminus) (PubMed:16079131).</text>
</comment>
<comment type="interaction">
    <interactant intactId="EBI-2896123">
        <id>Q9Y3D8</id>
    </interactant>
    <interactant intactId="EBI-945751">
        <id>P38432</id>
        <label>COIL</label>
    </interactant>
    <organismsDiffer>false</organismsDiffer>
    <experiments>5</experiments>
</comment>
<comment type="interaction">
    <interactant intactId="EBI-2896123">
        <id>Q9Y3D8</id>
    </interactant>
    <interactant intactId="EBI-713382">
        <id>O43504</id>
        <label>LAMTOR5</label>
    </interactant>
    <organismsDiffer>false</organismsDiffer>
    <experiments>3</experiments>
</comment>
<comment type="interaction">
    <interactant intactId="EBI-2896123">
        <id>Q9Y3D8</id>
    </interactant>
    <interactant intactId="EBI-10278703">
        <id>Q92597-3</id>
        <label>NDRG1</label>
    </interactant>
    <organismsDiffer>false</organismsDiffer>
    <experiments>3</experiments>
</comment>
<comment type="interaction">
    <interactant intactId="EBI-2896123">
        <id>Q9Y3D8</id>
    </interactant>
    <interactant intactId="EBI-352783">
        <id>P62263</id>
        <label>RPS14</label>
    </interactant>
    <organismsDiffer>false</organismsDiffer>
    <experiments>4</experiments>
</comment>
<comment type="subcellular location">
    <subcellularLocation>
        <location evidence="1">Cytoplasm</location>
    </subcellularLocation>
    <subcellularLocation>
        <location evidence="1">Nucleus</location>
        <location evidence="1">Nucleoplasm</location>
    </subcellularLocation>
    <subcellularLocation>
        <location evidence="1">Nucleus</location>
        <location evidence="1">Cajal body</location>
    </subcellularLocation>
    <text evidence="1">Displays widespread diffuse nucleoplasmic distribution but not detected in nucleoli. Detected in Cajal bodies but not in all cells.</text>
</comment>
<comment type="alternative products">
    <event type="alternative splicing"/>
    <isoform>
        <id>Q9Y3D8-1</id>
        <name>1</name>
        <name>AK6</name>
        <sequence type="displayed"/>
    </isoform>
    <isoform>
        <id>Q9Y3D8-2</id>
        <name>2</name>
        <sequence type="described" ref="VSP_039714"/>
    </isoform>
</comment>
<comment type="tissue specificity">
    <text evidence="4">Expressed in heart, brain, placenta, lung, liver, skeletal muscle, kidney, pancreas, chorionic villi and the central nervous system.</text>
</comment>
<comment type="similarity">
    <text evidence="1">Belongs to the adenylate kinase family. AK6 subfamily.</text>
</comment>
<comment type="caution">
    <text evidence="7">AK6 and TAF9 were initially considered as products of the same gene since they share two exons. However, they are translated from different initiation codons and reading frames and encode unrelated proteins. This arrangement is conserved in some mammalian species.</text>
</comment>
<accession>Q9Y3D8</accession>
<accession>A8MSZ6</accession>
<accession>Q5F2S9</accession>
<organism>
    <name type="scientific">Homo sapiens</name>
    <name type="common">Human</name>
    <dbReference type="NCBI Taxonomy" id="9606"/>
    <lineage>
        <taxon>Eukaryota</taxon>
        <taxon>Metazoa</taxon>
        <taxon>Chordata</taxon>
        <taxon>Craniata</taxon>
        <taxon>Vertebrata</taxon>
        <taxon>Euteleostomi</taxon>
        <taxon>Mammalia</taxon>
        <taxon>Eutheria</taxon>
        <taxon>Euarchontoglires</taxon>
        <taxon>Primates</taxon>
        <taxon>Haplorrhini</taxon>
        <taxon>Catarrhini</taxon>
        <taxon>Hominidae</taxon>
        <taxon>Homo</taxon>
    </lineage>
</organism>
<name>KAD6_HUMAN</name>
<evidence type="ECO:0000255" key="1">
    <source>
        <dbReference type="HAMAP-Rule" id="MF_03173"/>
    </source>
</evidence>
<evidence type="ECO:0000269" key="2">
    <source>
    </source>
</evidence>
<evidence type="ECO:0000269" key="3">
    <source>
    </source>
</evidence>
<evidence type="ECO:0000269" key="4">
    <source>
    </source>
</evidence>
<evidence type="ECO:0000269" key="5">
    <source>
    </source>
</evidence>
<evidence type="ECO:0000269" key="6">
    <source>
    </source>
</evidence>
<evidence type="ECO:0000305" key="7"/>
<evidence type="ECO:0007744" key="8">
    <source>
        <dbReference type="PDB" id="3IIJ"/>
    </source>
</evidence>
<evidence type="ECO:0007744" key="9">
    <source>
        <dbReference type="PDB" id="3IIL"/>
    </source>
</evidence>
<evidence type="ECO:0007744" key="10">
    <source>
        <dbReference type="PDB" id="5JZV"/>
    </source>
</evidence>
<evidence type="ECO:0007829" key="11">
    <source>
        <dbReference type="PDB" id="3IIJ"/>
    </source>
</evidence>
<protein>
    <recommendedName>
        <fullName evidence="1">Adenylate kinase isoenzyme 6</fullName>
        <shortName evidence="1">AK6</shortName>
        <ecNumber evidence="1">2.7.4.3</ecNumber>
    </recommendedName>
    <alternativeName>
        <fullName>Adrenal gland protein AD-004</fullName>
    </alternativeName>
    <alternativeName>
        <fullName evidence="1">Coilin-interacting nuclear ATPase protein</fullName>
        <shortName>hCINAP</shortName>
    </alternativeName>
    <alternativeName>
        <fullName evidence="1">Dual activity adenylate kinase/ATPase</fullName>
        <shortName evidence="1">AK/ATPase</shortName>
    </alternativeName>
</protein>